<protein>
    <recommendedName>
        <fullName>Nuclear hormone receptor family member nhr-127</fullName>
    </recommendedName>
</protein>
<comment type="function">
    <text evidence="3 5">Orphan nuclear receptor (Probable). May play a role in modulation of lifespan and immunity (PubMed:29748542).</text>
</comment>
<comment type="subcellular location">
    <subcellularLocation>
        <location evidence="1">Nucleus</location>
    </subcellularLocation>
</comment>
<comment type="induction">
    <text evidence="3">Transcription up-regulated in response to intestinal colonization by probiotic Lactobacillus fermentum strain JDFM216.</text>
</comment>
<comment type="similarity">
    <text evidence="4">Belongs to the nuclear hormone receptor family.</text>
</comment>
<accession>O18087</accession>
<feature type="chain" id="PRO_0000223702" description="Nuclear hormone receptor family member nhr-127">
    <location>
        <begin position="1"/>
        <end position="355"/>
    </location>
</feature>
<feature type="domain" description="NR LBD" evidence="2">
    <location>
        <begin position="126"/>
        <end position="355"/>
    </location>
</feature>
<feature type="DNA-binding region" description="Nuclear receptor" evidence="1">
    <location>
        <begin position="10"/>
        <end position="86"/>
    </location>
</feature>
<feature type="zinc finger region" description="NR C4-type" evidence="1">
    <location>
        <begin position="13"/>
        <end position="33"/>
    </location>
</feature>
<feature type="zinc finger region" description="NR C4-type" evidence="1">
    <location>
        <begin position="49"/>
        <end position="69"/>
    </location>
</feature>
<gene>
    <name type="primary">nhr-127</name>
    <name type="ORF">T13F3.3</name>
</gene>
<reference key="1">
    <citation type="journal article" date="1998" name="Science">
        <title>Genome sequence of the nematode C. elegans: a platform for investigating biology.</title>
        <authorList>
            <consortium name="The C. elegans sequencing consortium"/>
        </authorList>
    </citation>
    <scope>NUCLEOTIDE SEQUENCE [LARGE SCALE GENOMIC DNA]</scope>
    <source>
        <strain>Bristol N2</strain>
    </source>
</reference>
<reference key="2">
    <citation type="journal article" date="2018" name="Sci. Rep.">
        <title>Probiotic Lactobacillus fermentum strain JDFM216 stimulates the longevity and immune response of Caenorhabditis elegans through a nuclear hormone receptor.</title>
        <authorList>
            <person name="Park M.R."/>
            <person name="Ryu S."/>
            <person name="Maburutse B.E."/>
            <person name="Oh N.S."/>
            <person name="Kim S.H."/>
            <person name="Oh S."/>
            <person name="Jeong S.Y."/>
            <person name="Jeong D.Y."/>
            <person name="Oh S."/>
            <person name="Kim Y."/>
        </authorList>
    </citation>
    <scope>FUNCTION</scope>
    <scope>INDUCTION</scope>
</reference>
<name>NH127_CAEEL</name>
<proteinExistence type="evidence at transcript level"/>
<keyword id="KW-0238">DNA-binding</keyword>
<keyword id="KW-0479">Metal-binding</keyword>
<keyword id="KW-0539">Nucleus</keyword>
<keyword id="KW-0675">Receptor</keyword>
<keyword id="KW-1185">Reference proteome</keyword>
<keyword id="KW-0804">Transcription</keyword>
<keyword id="KW-0805">Transcription regulation</keyword>
<keyword id="KW-0862">Zinc</keyword>
<keyword id="KW-0863">Zinc-finger</keyword>
<dbReference type="EMBL" id="Z93389">
    <property type="protein sequence ID" value="CAB07671.2"/>
    <property type="molecule type" value="Genomic_DNA"/>
</dbReference>
<dbReference type="PIR" id="T24891">
    <property type="entry name" value="T24891"/>
</dbReference>
<dbReference type="RefSeq" id="NP_001370055.1">
    <property type="nucleotide sequence ID" value="NM_001383477.2"/>
</dbReference>
<dbReference type="RefSeq" id="NP_507104.2">
    <property type="nucleotide sequence ID" value="NM_074703.2"/>
</dbReference>
<dbReference type="SMR" id="O18087"/>
<dbReference type="FunCoup" id="O18087">
    <property type="interactions" value="20"/>
</dbReference>
<dbReference type="IntAct" id="O18087">
    <property type="interactions" value="1"/>
</dbReference>
<dbReference type="STRING" id="6239.T13F3.3.1"/>
<dbReference type="PaxDb" id="6239-T13F3.3"/>
<dbReference type="EnsemblMetazoa" id="T13F3.3.1">
    <property type="protein sequence ID" value="T13F3.3.1"/>
    <property type="gene ID" value="WBGene00003717"/>
</dbReference>
<dbReference type="EnsemblMetazoa" id="T13F3.3.2">
    <property type="protein sequence ID" value="T13F3.3.2"/>
    <property type="gene ID" value="WBGene00003717"/>
</dbReference>
<dbReference type="GeneID" id="188480"/>
<dbReference type="UCSC" id="T13F3.3">
    <property type="organism name" value="c. elegans"/>
</dbReference>
<dbReference type="AGR" id="WB:WBGene00003717"/>
<dbReference type="WormBase" id="T13F3.3">
    <property type="protein sequence ID" value="CE35617"/>
    <property type="gene ID" value="WBGene00003717"/>
    <property type="gene designation" value="nhr-127"/>
</dbReference>
<dbReference type="eggNOG" id="KOG3575">
    <property type="taxonomic scope" value="Eukaryota"/>
</dbReference>
<dbReference type="GeneTree" id="ENSGT00970000195937"/>
<dbReference type="HOGENOM" id="CLU_007368_7_0_1"/>
<dbReference type="InParanoid" id="O18087"/>
<dbReference type="OMA" id="NQERECI"/>
<dbReference type="OrthoDB" id="5815240at2759"/>
<dbReference type="PhylomeDB" id="O18087"/>
<dbReference type="PRO" id="PR:O18087"/>
<dbReference type="Proteomes" id="UP000001940">
    <property type="component" value="Chromosome V"/>
</dbReference>
<dbReference type="Bgee" id="WBGene00003717">
    <property type="expression patterns" value="Expressed in embryo and 3 other cell types or tissues"/>
</dbReference>
<dbReference type="GO" id="GO:0005634">
    <property type="term" value="C:nucleus"/>
    <property type="evidence" value="ECO:0007669"/>
    <property type="project" value="UniProtKB-SubCell"/>
</dbReference>
<dbReference type="GO" id="GO:0003700">
    <property type="term" value="F:DNA-binding transcription factor activity"/>
    <property type="evidence" value="ECO:0007669"/>
    <property type="project" value="InterPro"/>
</dbReference>
<dbReference type="GO" id="GO:0000978">
    <property type="term" value="F:RNA polymerase II cis-regulatory region sequence-specific DNA binding"/>
    <property type="evidence" value="ECO:0007669"/>
    <property type="project" value="InterPro"/>
</dbReference>
<dbReference type="GO" id="GO:0008270">
    <property type="term" value="F:zinc ion binding"/>
    <property type="evidence" value="ECO:0007669"/>
    <property type="project" value="UniProtKB-KW"/>
</dbReference>
<dbReference type="CDD" id="cd06960">
    <property type="entry name" value="NR_DBD_HNF4A"/>
    <property type="match status" value="1"/>
</dbReference>
<dbReference type="Gene3D" id="3.30.50.10">
    <property type="entry name" value="Erythroid Transcription Factor GATA-1, subunit A"/>
    <property type="match status" value="1"/>
</dbReference>
<dbReference type="Gene3D" id="1.10.565.10">
    <property type="entry name" value="Retinoid X Receptor"/>
    <property type="match status" value="1"/>
</dbReference>
<dbReference type="InterPro" id="IPR051152">
    <property type="entry name" value="C.elegans_Orphan_NR"/>
</dbReference>
<dbReference type="InterPro" id="IPR049636">
    <property type="entry name" value="HNF4-like_DBD"/>
</dbReference>
<dbReference type="InterPro" id="IPR035500">
    <property type="entry name" value="NHR-like_dom_sf"/>
</dbReference>
<dbReference type="InterPro" id="IPR000536">
    <property type="entry name" value="Nucl_hrmn_rcpt_lig-bd"/>
</dbReference>
<dbReference type="InterPro" id="IPR001628">
    <property type="entry name" value="Znf_hrmn_rcpt"/>
</dbReference>
<dbReference type="InterPro" id="IPR013088">
    <property type="entry name" value="Znf_NHR/GATA"/>
</dbReference>
<dbReference type="PANTHER" id="PTHR45680">
    <property type="entry name" value="NUCLEAR HORMONE RECEPTOR FAMILY"/>
    <property type="match status" value="1"/>
</dbReference>
<dbReference type="PANTHER" id="PTHR45680:SF26">
    <property type="entry name" value="NUCLEAR HORMONE RECEPTOR FAMILY MEMBER NHR-127-RELATED"/>
    <property type="match status" value="1"/>
</dbReference>
<dbReference type="Pfam" id="PF00104">
    <property type="entry name" value="Hormone_recep"/>
    <property type="match status" value="1"/>
</dbReference>
<dbReference type="Pfam" id="PF00105">
    <property type="entry name" value="zf-C4"/>
    <property type="match status" value="1"/>
</dbReference>
<dbReference type="PRINTS" id="PR00047">
    <property type="entry name" value="STROIDFINGER"/>
</dbReference>
<dbReference type="SMART" id="SM00430">
    <property type="entry name" value="HOLI"/>
    <property type="match status" value="1"/>
</dbReference>
<dbReference type="SMART" id="SM00399">
    <property type="entry name" value="ZnF_C4"/>
    <property type="match status" value="1"/>
</dbReference>
<dbReference type="SUPFAM" id="SSF57716">
    <property type="entry name" value="Glucocorticoid receptor-like (DNA-binding domain)"/>
    <property type="match status" value="1"/>
</dbReference>
<dbReference type="SUPFAM" id="SSF48508">
    <property type="entry name" value="Nuclear receptor ligand-binding domain"/>
    <property type="match status" value="1"/>
</dbReference>
<dbReference type="PROSITE" id="PS51843">
    <property type="entry name" value="NR_LBD"/>
    <property type="match status" value="1"/>
</dbReference>
<dbReference type="PROSITE" id="PS00031">
    <property type="entry name" value="NUCLEAR_REC_DBD_1"/>
    <property type="match status" value="1"/>
</dbReference>
<dbReference type="PROSITE" id="PS51030">
    <property type="entry name" value="NUCLEAR_REC_DBD_2"/>
    <property type="match status" value="1"/>
</dbReference>
<sequence>MKITFSPELSIPCEVCKNQSNGYHFEVLSCGACASFFRRSVVSKIKYQCKDGKKRCQIRYLDRHFCRYCRFSKCVKAGMKAEKIQKNRDLDSSPTPTDQNNCIPSDVLHDDGILIKDIRGLFKQFNPHNASEGCSKLEKLTEGLQFIRRNQERECIKIIDEMDSESLKDVQFKVIGSCATWLLFSSFFQKLEENEKVVILERLWHGWTVLEFLSRSLEIFGNKVIDEKIVFISDNTAIRLITAFENSLKTASPKKSESIKKKLELSFSVIFDELALHFINWKPTEIEISYMQWQIVWSVAEQLLSGNSLEKGEHFTEQLSKDLHEYYVRELKLENYAFRIEKMMDIVQIVQNNFY</sequence>
<evidence type="ECO:0000255" key="1">
    <source>
        <dbReference type="PROSITE-ProRule" id="PRU00407"/>
    </source>
</evidence>
<evidence type="ECO:0000255" key="2">
    <source>
        <dbReference type="PROSITE-ProRule" id="PRU01189"/>
    </source>
</evidence>
<evidence type="ECO:0000269" key="3">
    <source>
    </source>
</evidence>
<evidence type="ECO:0000305" key="4"/>
<evidence type="ECO:0000305" key="5">
    <source>
    </source>
</evidence>
<organism>
    <name type="scientific">Caenorhabditis elegans</name>
    <dbReference type="NCBI Taxonomy" id="6239"/>
    <lineage>
        <taxon>Eukaryota</taxon>
        <taxon>Metazoa</taxon>
        <taxon>Ecdysozoa</taxon>
        <taxon>Nematoda</taxon>
        <taxon>Chromadorea</taxon>
        <taxon>Rhabditida</taxon>
        <taxon>Rhabditina</taxon>
        <taxon>Rhabditomorpha</taxon>
        <taxon>Rhabditoidea</taxon>
        <taxon>Rhabditidae</taxon>
        <taxon>Peloderinae</taxon>
        <taxon>Caenorhabditis</taxon>
    </lineage>
</organism>